<feature type="chain" id="PRO_1000133534" description="Small ribosomal subunit protein bS6">
    <location>
        <begin position="1"/>
        <end position="151"/>
    </location>
</feature>
<feature type="region of interest" description="Disordered" evidence="2">
    <location>
        <begin position="97"/>
        <end position="151"/>
    </location>
</feature>
<feature type="compositionally biased region" description="Basic and acidic residues" evidence="2">
    <location>
        <begin position="105"/>
        <end position="151"/>
    </location>
</feature>
<accession>B7L2P2</accession>
<protein>
    <recommendedName>
        <fullName evidence="1">Small ribosomal subunit protein bS6</fullName>
    </recommendedName>
    <alternativeName>
        <fullName evidence="3">30S ribosomal protein S6</fullName>
    </alternativeName>
</protein>
<name>RS6_METC4</name>
<reference key="1">
    <citation type="submission" date="2008-12" db="EMBL/GenBank/DDBJ databases">
        <title>Complete sequence of chromosome of Methylobacterium chloromethanicum CM4.</title>
        <authorList>
            <consortium name="US DOE Joint Genome Institute"/>
            <person name="Lucas S."/>
            <person name="Copeland A."/>
            <person name="Lapidus A."/>
            <person name="Glavina del Rio T."/>
            <person name="Dalin E."/>
            <person name="Tice H."/>
            <person name="Bruce D."/>
            <person name="Goodwin L."/>
            <person name="Pitluck S."/>
            <person name="Chertkov O."/>
            <person name="Brettin T."/>
            <person name="Detter J.C."/>
            <person name="Han C."/>
            <person name="Larimer F."/>
            <person name="Land M."/>
            <person name="Hauser L."/>
            <person name="Kyrpides N."/>
            <person name="Mikhailova N."/>
            <person name="Marx C."/>
            <person name="Richardson P."/>
        </authorList>
    </citation>
    <scope>NUCLEOTIDE SEQUENCE [LARGE SCALE GENOMIC DNA]</scope>
    <source>
        <strain>CM4 / NCIMB 13688</strain>
    </source>
</reference>
<proteinExistence type="inferred from homology"/>
<organism>
    <name type="scientific">Methylorubrum extorquens (strain CM4 / NCIMB 13688)</name>
    <name type="common">Methylobacterium extorquens</name>
    <dbReference type="NCBI Taxonomy" id="440085"/>
    <lineage>
        <taxon>Bacteria</taxon>
        <taxon>Pseudomonadati</taxon>
        <taxon>Pseudomonadota</taxon>
        <taxon>Alphaproteobacteria</taxon>
        <taxon>Hyphomicrobiales</taxon>
        <taxon>Methylobacteriaceae</taxon>
        <taxon>Methylorubrum</taxon>
    </lineage>
</organism>
<sequence length="151" mass="17356">MPLYEHVFLARQDVTAQQVETMVETYKGVIETGGGTIEKIESWGVKSLAYRIKKNRKAHFTLLNISAPPAAVAEMERQMQISEDVLRFMTVRVEQLEAEPSAMMQKRDRDDRKDRDRGDRPRRRDDDFGGGDRGDRGDRGDRPERNFGGEN</sequence>
<dbReference type="EMBL" id="CP001298">
    <property type="protein sequence ID" value="ACK85086.1"/>
    <property type="molecule type" value="Genomic_DNA"/>
</dbReference>
<dbReference type="RefSeq" id="WP_012255117.1">
    <property type="nucleotide sequence ID" value="NC_011757.1"/>
</dbReference>
<dbReference type="SMR" id="B7L2P2"/>
<dbReference type="GeneID" id="72991658"/>
<dbReference type="KEGG" id="mch:Mchl_4310"/>
<dbReference type="HOGENOM" id="CLU_113441_2_0_5"/>
<dbReference type="Proteomes" id="UP000002385">
    <property type="component" value="Chromosome"/>
</dbReference>
<dbReference type="GO" id="GO:0022627">
    <property type="term" value="C:cytosolic small ribosomal subunit"/>
    <property type="evidence" value="ECO:0007669"/>
    <property type="project" value="TreeGrafter"/>
</dbReference>
<dbReference type="GO" id="GO:0070181">
    <property type="term" value="F:small ribosomal subunit rRNA binding"/>
    <property type="evidence" value="ECO:0007669"/>
    <property type="project" value="TreeGrafter"/>
</dbReference>
<dbReference type="GO" id="GO:0003735">
    <property type="term" value="F:structural constituent of ribosome"/>
    <property type="evidence" value="ECO:0007669"/>
    <property type="project" value="InterPro"/>
</dbReference>
<dbReference type="GO" id="GO:0006412">
    <property type="term" value="P:translation"/>
    <property type="evidence" value="ECO:0007669"/>
    <property type="project" value="UniProtKB-UniRule"/>
</dbReference>
<dbReference type="CDD" id="cd00473">
    <property type="entry name" value="bS6"/>
    <property type="match status" value="1"/>
</dbReference>
<dbReference type="Gene3D" id="3.30.70.60">
    <property type="match status" value="1"/>
</dbReference>
<dbReference type="HAMAP" id="MF_00360">
    <property type="entry name" value="Ribosomal_bS6"/>
    <property type="match status" value="1"/>
</dbReference>
<dbReference type="InterPro" id="IPR000529">
    <property type="entry name" value="Ribosomal_bS6"/>
</dbReference>
<dbReference type="InterPro" id="IPR035980">
    <property type="entry name" value="Ribosomal_bS6_sf"/>
</dbReference>
<dbReference type="InterPro" id="IPR020814">
    <property type="entry name" value="Ribosomal_S6_plastid/chlpt"/>
</dbReference>
<dbReference type="InterPro" id="IPR014717">
    <property type="entry name" value="Transl_elong_EF1B/ribsomal_bS6"/>
</dbReference>
<dbReference type="NCBIfam" id="TIGR00166">
    <property type="entry name" value="S6"/>
    <property type="match status" value="1"/>
</dbReference>
<dbReference type="PANTHER" id="PTHR21011">
    <property type="entry name" value="MITOCHONDRIAL 28S RIBOSOMAL PROTEIN S6"/>
    <property type="match status" value="1"/>
</dbReference>
<dbReference type="PANTHER" id="PTHR21011:SF1">
    <property type="entry name" value="SMALL RIBOSOMAL SUBUNIT PROTEIN BS6M"/>
    <property type="match status" value="1"/>
</dbReference>
<dbReference type="Pfam" id="PF01250">
    <property type="entry name" value="Ribosomal_S6"/>
    <property type="match status" value="1"/>
</dbReference>
<dbReference type="SUPFAM" id="SSF54995">
    <property type="entry name" value="Ribosomal protein S6"/>
    <property type="match status" value="1"/>
</dbReference>
<evidence type="ECO:0000255" key="1">
    <source>
        <dbReference type="HAMAP-Rule" id="MF_00360"/>
    </source>
</evidence>
<evidence type="ECO:0000256" key="2">
    <source>
        <dbReference type="SAM" id="MobiDB-lite"/>
    </source>
</evidence>
<evidence type="ECO:0000305" key="3"/>
<comment type="function">
    <text evidence="1">Binds together with bS18 to 16S ribosomal RNA.</text>
</comment>
<comment type="similarity">
    <text evidence="1">Belongs to the bacterial ribosomal protein bS6 family.</text>
</comment>
<gene>
    <name evidence="1" type="primary">rpsF</name>
    <name type="ordered locus">Mchl_4310</name>
</gene>
<keyword id="KW-0687">Ribonucleoprotein</keyword>
<keyword id="KW-0689">Ribosomal protein</keyword>
<keyword id="KW-0694">RNA-binding</keyword>
<keyword id="KW-0699">rRNA-binding</keyword>